<comment type="subunit">
    <text evidence="1">Part of a tripartite efflux system composed of MdtA, MdtB and MdtC. MdtB forms a heteromultimer with MdtC.</text>
</comment>
<comment type="subcellular location">
    <subcellularLocation>
        <location evidence="1">Cell inner membrane</location>
        <topology evidence="1">Multi-pass membrane protein</topology>
    </subcellularLocation>
</comment>
<comment type="similarity">
    <text evidence="1">Belongs to the resistance-nodulation-cell division (RND) (TC 2.A.6) family. MdtB subfamily.</text>
</comment>
<gene>
    <name evidence="1" type="primary">mdtB</name>
    <name type="ordered locus">STM2127</name>
</gene>
<name>MDTB_SALTY</name>
<dbReference type="EMBL" id="AE006468">
    <property type="protein sequence ID" value="AAL21031.1"/>
    <property type="molecule type" value="Genomic_DNA"/>
</dbReference>
<dbReference type="RefSeq" id="WP_001197805.1">
    <property type="nucleotide sequence ID" value="NC_003197.2"/>
</dbReference>
<dbReference type="SMR" id="Q8ZNQ2"/>
<dbReference type="STRING" id="99287.STM2127"/>
<dbReference type="PaxDb" id="99287-STM2127"/>
<dbReference type="KEGG" id="stm:STM2127"/>
<dbReference type="PATRIC" id="fig|99287.12.peg.2252"/>
<dbReference type="HOGENOM" id="CLU_002755_1_1_6"/>
<dbReference type="OMA" id="VPMMCAK"/>
<dbReference type="PhylomeDB" id="Q8ZNQ2"/>
<dbReference type="BioCyc" id="SENT99287:STM2127-MONOMER"/>
<dbReference type="Proteomes" id="UP000001014">
    <property type="component" value="Chromosome"/>
</dbReference>
<dbReference type="GO" id="GO:0005886">
    <property type="term" value="C:plasma membrane"/>
    <property type="evidence" value="ECO:0000318"/>
    <property type="project" value="GO_Central"/>
</dbReference>
<dbReference type="GO" id="GO:0042910">
    <property type="term" value="F:xenobiotic transmembrane transporter activity"/>
    <property type="evidence" value="ECO:0000318"/>
    <property type="project" value="GO_Central"/>
</dbReference>
<dbReference type="FunFam" id="1.20.1640.10:FF:000001">
    <property type="entry name" value="Efflux pump membrane transporter"/>
    <property type="match status" value="1"/>
</dbReference>
<dbReference type="FunFam" id="3.30.70.1430:FF:000001">
    <property type="entry name" value="Efflux pump membrane transporter"/>
    <property type="match status" value="1"/>
</dbReference>
<dbReference type="FunFam" id="3.30.2090.10:FF:000003">
    <property type="entry name" value="Multidrug resistance protein MdtB"/>
    <property type="match status" value="1"/>
</dbReference>
<dbReference type="Gene3D" id="3.30.70.1430">
    <property type="entry name" value="Multidrug efflux transporter AcrB pore domain"/>
    <property type="match status" value="2"/>
</dbReference>
<dbReference type="Gene3D" id="3.30.70.1440">
    <property type="entry name" value="Multidrug efflux transporter AcrB pore domain"/>
    <property type="match status" value="1"/>
</dbReference>
<dbReference type="Gene3D" id="3.30.70.1320">
    <property type="entry name" value="Multidrug efflux transporter AcrB pore domain like"/>
    <property type="match status" value="1"/>
</dbReference>
<dbReference type="Gene3D" id="3.30.2090.10">
    <property type="entry name" value="Multidrug efflux transporter AcrB TolC docking domain, DN and DC subdomains"/>
    <property type="match status" value="2"/>
</dbReference>
<dbReference type="Gene3D" id="1.20.1640.10">
    <property type="entry name" value="Multidrug efflux transporter AcrB transmembrane domain"/>
    <property type="match status" value="2"/>
</dbReference>
<dbReference type="HAMAP" id="MF_01423">
    <property type="entry name" value="MdtB"/>
    <property type="match status" value="1"/>
</dbReference>
<dbReference type="InterPro" id="IPR027463">
    <property type="entry name" value="AcrB_DN_DC_subdom"/>
</dbReference>
<dbReference type="InterPro" id="IPR001036">
    <property type="entry name" value="Acrflvin-R"/>
</dbReference>
<dbReference type="InterPro" id="IPR022831">
    <property type="entry name" value="Multidrug-R_MdtB"/>
</dbReference>
<dbReference type="NCBIfam" id="NF007798">
    <property type="entry name" value="PRK10503.1"/>
    <property type="match status" value="1"/>
</dbReference>
<dbReference type="NCBIfam" id="NF033617">
    <property type="entry name" value="RND_permease_2"/>
    <property type="match status" value="1"/>
</dbReference>
<dbReference type="PANTHER" id="PTHR32063">
    <property type="match status" value="1"/>
</dbReference>
<dbReference type="PANTHER" id="PTHR32063:SF21">
    <property type="entry name" value="MULTIDRUG RESISTANCE PROTEIN MDTB"/>
    <property type="match status" value="1"/>
</dbReference>
<dbReference type="Pfam" id="PF00873">
    <property type="entry name" value="ACR_tran"/>
    <property type="match status" value="1"/>
</dbReference>
<dbReference type="PRINTS" id="PR00702">
    <property type="entry name" value="ACRIFLAVINRP"/>
</dbReference>
<dbReference type="SUPFAM" id="SSF82693">
    <property type="entry name" value="Multidrug efflux transporter AcrB pore domain, PN1, PN2, PC1 and PC2 subdomains"/>
    <property type="match status" value="3"/>
</dbReference>
<dbReference type="SUPFAM" id="SSF82714">
    <property type="entry name" value="Multidrug efflux transporter AcrB TolC docking domain, DN and DC subdomains"/>
    <property type="match status" value="2"/>
</dbReference>
<dbReference type="SUPFAM" id="SSF82866">
    <property type="entry name" value="Multidrug efflux transporter AcrB transmembrane domain"/>
    <property type="match status" value="2"/>
</dbReference>
<reference key="1">
    <citation type="journal article" date="2001" name="Nature">
        <title>Complete genome sequence of Salmonella enterica serovar Typhimurium LT2.</title>
        <authorList>
            <person name="McClelland M."/>
            <person name="Sanderson K.E."/>
            <person name="Spieth J."/>
            <person name="Clifton S.W."/>
            <person name="Latreille P."/>
            <person name="Courtney L."/>
            <person name="Porwollik S."/>
            <person name="Ali J."/>
            <person name="Dante M."/>
            <person name="Du F."/>
            <person name="Hou S."/>
            <person name="Layman D."/>
            <person name="Leonard S."/>
            <person name="Nguyen C."/>
            <person name="Scott K."/>
            <person name="Holmes A."/>
            <person name="Grewal N."/>
            <person name="Mulvaney E."/>
            <person name="Ryan E."/>
            <person name="Sun H."/>
            <person name="Florea L."/>
            <person name="Miller W."/>
            <person name="Stoneking T."/>
            <person name="Nhan M."/>
            <person name="Waterston R."/>
            <person name="Wilson R.K."/>
        </authorList>
    </citation>
    <scope>NUCLEOTIDE SEQUENCE [LARGE SCALE GENOMIC DNA]</scope>
    <source>
        <strain>LT2 / SGSC1412 / ATCC 700720</strain>
    </source>
</reference>
<evidence type="ECO:0000255" key="1">
    <source>
        <dbReference type="HAMAP-Rule" id="MF_01423"/>
    </source>
</evidence>
<keyword id="KW-0997">Cell inner membrane</keyword>
<keyword id="KW-1003">Cell membrane</keyword>
<keyword id="KW-0472">Membrane</keyword>
<keyword id="KW-1185">Reference proteome</keyword>
<keyword id="KW-0812">Transmembrane</keyword>
<keyword id="KW-1133">Transmembrane helix</keyword>
<keyword id="KW-0813">Transport</keyword>
<proteinExistence type="inferred from homology"/>
<protein>
    <recommendedName>
        <fullName evidence="1">Multidrug resistance protein MdtB</fullName>
    </recommendedName>
    <alternativeName>
        <fullName evidence="1">Multidrug transporter MdtB</fullName>
    </alternativeName>
</protein>
<accession>Q8ZNQ2</accession>
<sequence>MQVLPPGSTGGPSRLFILRPVATTLLMAAILLAGIIGYRFLPVAALPEVDYPTIQVVTLYPGASPDVMTSAVTAPLERQFGQMSGLKQMSSQSSGGASVVTLQFQLTLPLDVAEQEVQAAINAATNLLPSDLPNPPIYSKVNPADPPIMTLAVTSNSMPMTQVEDMVETRVAQKISQVSGVGLVTLAGGQRPAVRVKLNAQAVAALGLTSETVRTAITGANVNSAKGSLDGPERAVTLSANDQMQSADEYRRLIIAYQNGAPVRLGDVATVEQGAENSWLGAWANQAPAIVMNVQRQPGANIIATADSIRQMLPQLTESLPKSVKVTVLSDRTTNIRASVRDTQFELMLAIALVVMIIYLFLRNIPATIIPGVAVPLSLIGTFAVMVFLDFSINNLTLMALTIATGFVVDDAIVVIENISRYIEKGEKPLAAALKGAGEIGFTIISLTFSLIAVLIPLLFMGDIVGRLFREFAVTLAVAILISAVVSLTLTPMMCARMLSQQSLRKQNRFSRACERMFDRVIASYGRGLAKVLNHPWLTLSVAFATLLLSVMLWIVIPKGFFPVQDNGIIQGTLQAPQSSSYASMAQRQRQVAERILQDPAVQSLTTFVGVDGANPTLNSARLQINLKPLDARDDRVQQVISRLQTAVATIPGVELYLQPTQDLTIDTQVSRTQYQFTLQATTLDALSHWVPKLQNALQSLPQLSEVSSDWQDRGLAAWVNVDRDSASRLGISMADVDNALYNAFGQRLISTIYTQANQYRVVLEHNTASMPGLAALETIRLTSRDGGTVPLSAIARIEQRFAPLSINHLDQFPVTTFSFNVPESYSLGDAVQAILDTEKTLALPADITTQFQGSTLAFQAALGSTVWLIVAAVVAMYIVLGVLYESFIHPITILSTLPTAGVGALLALIIAGSELDIIAIIGIILLIGIVKKNAIMMIDFALAAEREQGMSPRDAIFQACLLRFRPILMTTLAALLGALPLMLSTGVGTELRRPLGIAMVGGLLVSQVLTLFTTPVIYLLFDRLSLYVKSRFPRHKEEA</sequence>
<feature type="chain" id="PRO_0000161827" description="Multidrug resistance protein MdtB">
    <location>
        <begin position="1"/>
        <end position="1040"/>
    </location>
</feature>
<feature type="transmembrane region" description="Helical" evidence="1">
    <location>
        <begin position="15"/>
        <end position="37"/>
    </location>
</feature>
<feature type="transmembrane region" description="Helical" evidence="1">
    <location>
        <begin position="345"/>
        <end position="362"/>
    </location>
</feature>
<feature type="transmembrane region" description="Helical" evidence="1">
    <location>
        <begin position="367"/>
        <end position="389"/>
    </location>
</feature>
<feature type="transmembrane region" description="Helical" evidence="1">
    <location>
        <begin position="396"/>
        <end position="418"/>
    </location>
</feature>
<feature type="transmembrane region" description="Helical" evidence="1">
    <location>
        <begin position="438"/>
        <end position="460"/>
    </location>
</feature>
<feature type="transmembrane region" description="Helical" evidence="1">
    <location>
        <begin position="472"/>
        <end position="494"/>
    </location>
</feature>
<feature type="transmembrane region" description="Helical" evidence="1">
    <location>
        <begin position="535"/>
        <end position="557"/>
    </location>
</feature>
<feature type="transmembrane region" description="Helical" evidence="1">
    <location>
        <begin position="867"/>
        <end position="889"/>
    </location>
</feature>
<feature type="transmembrane region" description="Helical" evidence="1">
    <location>
        <begin position="909"/>
        <end position="931"/>
    </location>
</feature>
<feature type="transmembrane region" description="Helical" evidence="1">
    <location>
        <begin position="968"/>
        <end position="990"/>
    </location>
</feature>
<feature type="transmembrane region" description="Helical" evidence="1">
    <location>
        <begin position="1000"/>
        <end position="1022"/>
    </location>
</feature>
<organism>
    <name type="scientific">Salmonella typhimurium (strain LT2 / SGSC1412 / ATCC 700720)</name>
    <dbReference type="NCBI Taxonomy" id="99287"/>
    <lineage>
        <taxon>Bacteria</taxon>
        <taxon>Pseudomonadati</taxon>
        <taxon>Pseudomonadota</taxon>
        <taxon>Gammaproteobacteria</taxon>
        <taxon>Enterobacterales</taxon>
        <taxon>Enterobacteriaceae</taxon>
        <taxon>Salmonella</taxon>
    </lineage>
</organism>